<sequence length="364" mass="41197">MAEAYLLEKLRTVEQTFTELTRRLADPDVAVNPTEFQKVARSRAALEETVNAYHEWQSLNQQLVDARQLHKEAANEPELRQMAEEEIAHLSHRIAQLEERLKILLLPRDPNDEKNIMLEIRAGAGGDEAGIWAGDLVRMYSRYAKTQGWQVTLVSESLAEMGGFKEAILEIKGDRVYSKLKYESGVHRVQRVPATEASGRIHTSTATVAVMPEVDEVEVEIDPKDIELTTARSGGAGGQNVNKVETAVDLYHKPTGIRIFCTEERSQLKNKERAFQILRAKLYEIKLREQQEAITSMRRSQVGTGDRSEKIRTYNYKDDRVTDHRLGQNFSLSSVLEGDLEPIIQACISRDQQEQLAQLAAEQA</sequence>
<accession>Q8DMG9</accession>
<name>RF1_THEVB</name>
<proteinExistence type="inferred from homology"/>
<keyword id="KW-0963">Cytoplasm</keyword>
<keyword id="KW-0488">Methylation</keyword>
<keyword id="KW-0648">Protein biosynthesis</keyword>
<keyword id="KW-1185">Reference proteome</keyword>
<gene>
    <name evidence="1" type="primary">prfA</name>
    <name type="ordered locus">tlr0148</name>
</gene>
<evidence type="ECO:0000255" key="1">
    <source>
        <dbReference type="HAMAP-Rule" id="MF_00093"/>
    </source>
</evidence>
<reference key="1">
    <citation type="journal article" date="2002" name="DNA Res.">
        <title>Complete genome structure of the thermophilic cyanobacterium Thermosynechococcus elongatus BP-1.</title>
        <authorList>
            <person name="Nakamura Y."/>
            <person name="Kaneko T."/>
            <person name="Sato S."/>
            <person name="Ikeuchi M."/>
            <person name="Katoh H."/>
            <person name="Sasamoto S."/>
            <person name="Watanabe A."/>
            <person name="Iriguchi M."/>
            <person name="Kawashima K."/>
            <person name="Kimura T."/>
            <person name="Kishida Y."/>
            <person name="Kiyokawa C."/>
            <person name="Kohara M."/>
            <person name="Matsumoto M."/>
            <person name="Matsuno A."/>
            <person name="Nakazaki N."/>
            <person name="Shimpo S."/>
            <person name="Sugimoto M."/>
            <person name="Takeuchi C."/>
            <person name="Yamada M."/>
            <person name="Tabata S."/>
        </authorList>
    </citation>
    <scope>NUCLEOTIDE SEQUENCE [LARGE SCALE GENOMIC DNA]</scope>
    <source>
        <strain>NIES-2133 / IAM M-273 / BP-1</strain>
    </source>
</reference>
<comment type="function">
    <text evidence="1">Peptide chain release factor 1 directs the termination of translation in response to the peptide chain termination codons UAG and UAA.</text>
</comment>
<comment type="subcellular location">
    <subcellularLocation>
        <location evidence="1">Cytoplasm</location>
    </subcellularLocation>
</comment>
<comment type="PTM">
    <text evidence="1">Methylated by PrmC. Methylation increases the termination efficiency of RF1.</text>
</comment>
<comment type="similarity">
    <text evidence="1">Belongs to the prokaryotic/mitochondrial release factor family.</text>
</comment>
<organism>
    <name type="scientific">Thermosynechococcus vestitus (strain NIES-2133 / IAM M-273 / BP-1)</name>
    <dbReference type="NCBI Taxonomy" id="197221"/>
    <lineage>
        <taxon>Bacteria</taxon>
        <taxon>Bacillati</taxon>
        <taxon>Cyanobacteriota</taxon>
        <taxon>Cyanophyceae</taxon>
        <taxon>Acaryochloridales</taxon>
        <taxon>Thermosynechococcaceae</taxon>
        <taxon>Thermosynechococcus</taxon>
    </lineage>
</organism>
<feature type="chain" id="PRO_0000177758" description="Peptide chain release factor 1">
    <location>
        <begin position="1"/>
        <end position="364"/>
    </location>
</feature>
<feature type="modified residue" description="N5-methylglutamine" evidence="1">
    <location>
        <position position="239"/>
    </location>
</feature>
<dbReference type="EMBL" id="BA000039">
    <property type="protein sequence ID" value="BAC07701.1"/>
    <property type="molecule type" value="Genomic_DNA"/>
</dbReference>
<dbReference type="RefSeq" id="NP_680939.1">
    <property type="nucleotide sequence ID" value="NC_004113.1"/>
</dbReference>
<dbReference type="RefSeq" id="WP_011056003.1">
    <property type="nucleotide sequence ID" value="NC_004113.1"/>
</dbReference>
<dbReference type="SMR" id="Q8DMG9"/>
<dbReference type="STRING" id="197221.gene:10746728"/>
<dbReference type="EnsemblBacteria" id="BAC07701">
    <property type="protein sequence ID" value="BAC07701"/>
    <property type="gene ID" value="BAC07701"/>
</dbReference>
<dbReference type="KEGG" id="tel:tlr0148"/>
<dbReference type="PATRIC" id="fig|197221.4.peg.154"/>
<dbReference type="eggNOG" id="COG0216">
    <property type="taxonomic scope" value="Bacteria"/>
</dbReference>
<dbReference type="Proteomes" id="UP000000440">
    <property type="component" value="Chromosome"/>
</dbReference>
<dbReference type="GO" id="GO:0005737">
    <property type="term" value="C:cytoplasm"/>
    <property type="evidence" value="ECO:0007669"/>
    <property type="project" value="UniProtKB-SubCell"/>
</dbReference>
<dbReference type="GO" id="GO:0016149">
    <property type="term" value="F:translation release factor activity, codon specific"/>
    <property type="evidence" value="ECO:0007669"/>
    <property type="project" value="UniProtKB-UniRule"/>
</dbReference>
<dbReference type="FunFam" id="3.30.160.20:FF:000004">
    <property type="entry name" value="Peptide chain release factor 1"/>
    <property type="match status" value="1"/>
</dbReference>
<dbReference type="FunFam" id="3.30.70.1660:FF:000002">
    <property type="entry name" value="Peptide chain release factor 1"/>
    <property type="match status" value="1"/>
</dbReference>
<dbReference type="FunFam" id="3.30.70.1660:FF:000014">
    <property type="entry name" value="Peptide chain release factor 1"/>
    <property type="match status" value="1"/>
</dbReference>
<dbReference type="Gene3D" id="3.30.160.20">
    <property type="match status" value="1"/>
</dbReference>
<dbReference type="Gene3D" id="3.30.70.1660">
    <property type="match status" value="2"/>
</dbReference>
<dbReference type="Gene3D" id="6.10.140.1950">
    <property type="match status" value="1"/>
</dbReference>
<dbReference type="HAMAP" id="MF_00093">
    <property type="entry name" value="Rel_fac_1"/>
    <property type="match status" value="1"/>
</dbReference>
<dbReference type="InterPro" id="IPR005139">
    <property type="entry name" value="PCRF"/>
</dbReference>
<dbReference type="InterPro" id="IPR000352">
    <property type="entry name" value="Pep_chain_release_fac_I"/>
</dbReference>
<dbReference type="InterPro" id="IPR045853">
    <property type="entry name" value="Pep_chain_release_fac_I_sf"/>
</dbReference>
<dbReference type="InterPro" id="IPR050057">
    <property type="entry name" value="Prokaryotic/Mito_RF"/>
</dbReference>
<dbReference type="InterPro" id="IPR004373">
    <property type="entry name" value="RF-1"/>
</dbReference>
<dbReference type="NCBIfam" id="TIGR00019">
    <property type="entry name" value="prfA"/>
    <property type="match status" value="1"/>
</dbReference>
<dbReference type="NCBIfam" id="NF001859">
    <property type="entry name" value="PRK00591.1"/>
    <property type="match status" value="1"/>
</dbReference>
<dbReference type="PANTHER" id="PTHR43804">
    <property type="entry name" value="LD18447P"/>
    <property type="match status" value="1"/>
</dbReference>
<dbReference type="PANTHER" id="PTHR43804:SF8">
    <property type="entry name" value="PEPTIDE CHAIN RELEASE FACTOR APG3, CHLOROPLASTIC"/>
    <property type="match status" value="1"/>
</dbReference>
<dbReference type="Pfam" id="PF03462">
    <property type="entry name" value="PCRF"/>
    <property type="match status" value="1"/>
</dbReference>
<dbReference type="Pfam" id="PF00472">
    <property type="entry name" value="RF-1"/>
    <property type="match status" value="1"/>
</dbReference>
<dbReference type="SMART" id="SM00937">
    <property type="entry name" value="PCRF"/>
    <property type="match status" value="1"/>
</dbReference>
<dbReference type="SUPFAM" id="SSF75620">
    <property type="entry name" value="Release factor"/>
    <property type="match status" value="1"/>
</dbReference>
<dbReference type="PROSITE" id="PS00745">
    <property type="entry name" value="RF_PROK_I"/>
    <property type="match status" value="1"/>
</dbReference>
<protein>
    <recommendedName>
        <fullName evidence="1">Peptide chain release factor 1</fullName>
        <shortName evidence="1">RF-1</shortName>
    </recommendedName>
</protein>